<accession>B7MNQ3</accession>
<name>KEFF_ECO81</name>
<feature type="chain" id="PRO_1000184621" description="Glutathione-regulated potassium-efflux system ancillary protein KefF">
    <location>
        <begin position="1"/>
        <end position="176"/>
    </location>
</feature>
<feature type="binding site" evidence="1">
    <location>
        <position position="8"/>
    </location>
    <ligand>
        <name>FMN</name>
        <dbReference type="ChEBI" id="CHEBI:58210"/>
    </ligand>
</feature>
<feature type="binding site" evidence="1">
    <location>
        <begin position="14"/>
        <end position="17"/>
    </location>
    <ligand>
        <name>FMN</name>
        <dbReference type="ChEBI" id="CHEBI:58210"/>
    </ligand>
</feature>
<feature type="binding site" evidence="1">
    <location>
        <begin position="65"/>
        <end position="68"/>
    </location>
    <ligand>
        <name>FMN</name>
        <dbReference type="ChEBI" id="CHEBI:58210"/>
    </ligand>
</feature>
<feature type="binding site" evidence="1">
    <location>
        <begin position="105"/>
        <end position="108"/>
    </location>
    <ligand>
        <name>FMN</name>
        <dbReference type="ChEBI" id="CHEBI:58210"/>
    </ligand>
</feature>
<dbReference type="EC" id="1.6.5.2" evidence="1"/>
<dbReference type="EMBL" id="CU928162">
    <property type="protein sequence ID" value="CAR06268.1"/>
    <property type="molecule type" value="Genomic_DNA"/>
</dbReference>
<dbReference type="RefSeq" id="WP_000600725.1">
    <property type="nucleotide sequence ID" value="NC_011745.1"/>
</dbReference>
<dbReference type="SMR" id="B7MNQ3"/>
<dbReference type="GeneID" id="89519427"/>
<dbReference type="KEGG" id="ecq:ECED1_0045"/>
<dbReference type="HOGENOM" id="CLU_058643_0_2_6"/>
<dbReference type="Proteomes" id="UP000000748">
    <property type="component" value="Chromosome"/>
</dbReference>
<dbReference type="GO" id="GO:0005886">
    <property type="term" value="C:plasma membrane"/>
    <property type="evidence" value="ECO:0007669"/>
    <property type="project" value="UniProtKB-SubCell"/>
</dbReference>
<dbReference type="GO" id="GO:0009055">
    <property type="term" value="F:electron transfer activity"/>
    <property type="evidence" value="ECO:0007669"/>
    <property type="project" value="TreeGrafter"/>
</dbReference>
<dbReference type="GO" id="GO:0010181">
    <property type="term" value="F:FMN binding"/>
    <property type="evidence" value="ECO:0007669"/>
    <property type="project" value="UniProtKB-UniRule"/>
</dbReference>
<dbReference type="GO" id="GO:0050136">
    <property type="term" value="F:NADH:ubiquinone reductase (non-electrogenic) activity"/>
    <property type="evidence" value="ECO:0007669"/>
    <property type="project" value="RHEA"/>
</dbReference>
<dbReference type="GO" id="GO:0008753">
    <property type="term" value="F:NADPH dehydrogenase (quinone) activity"/>
    <property type="evidence" value="ECO:0007669"/>
    <property type="project" value="RHEA"/>
</dbReference>
<dbReference type="GO" id="GO:1901381">
    <property type="term" value="P:positive regulation of potassium ion transmembrane transport"/>
    <property type="evidence" value="ECO:0007669"/>
    <property type="project" value="UniProtKB-UniRule"/>
</dbReference>
<dbReference type="GO" id="GO:0006813">
    <property type="term" value="P:potassium ion transport"/>
    <property type="evidence" value="ECO:0007669"/>
    <property type="project" value="InterPro"/>
</dbReference>
<dbReference type="FunFam" id="3.40.50.360:FF:000008">
    <property type="entry name" value="Glutathione-regulated potassium-efflux system ancillary protein KefF"/>
    <property type="match status" value="1"/>
</dbReference>
<dbReference type="Gene3D" id="3.40.50.360">
    <property type="match status" value="1"/>
</dbReference>
<dbReference type="HAMAP" id="MF_01414">
    <property type="entry name" value="K_H_efflux_KefF"/>
    <property type="match status" value="1"/>
</dbReference>
<dbReference type="InterPro" id="IPR003680">
    <property type="entry name" value="Flavodoxin_fold"/>
</dbReference>
<dbReference type="InterPro" id="IPR029039">
    <property type="entry name" value="Flavoprotein-like_sf"/>
</dbReference>
<dbReference type="InterPro" id="IPR023948">
    <property type="entry name" value="K_H_efflux_KefF"/>
</dbReference>
<dbReference type="InterPro" id="IPR046980">
    <property type="entry name" value="KefG/KefF"/>
</dbReference>
<dbReference type="NCBIfam" id="NF002044">
    <property type="entry name" value="PRK00871.1"/>
    <property type="match status" value="1"/>
</dbReference>
<dbReference type="PANTHER" id="PTHR47307:SF2">
    <property type="entry name" value="GLUTATHIONE-REGULATED POTASSIUM-EFFLUX SYSTEM ANCILLARY PROTEIN KEFF"/>
    <property type="match status" value="1"/>
</dbReference>
<dbReference type="PANTHER" id="PTHR47307">
    <property type="entry name" value="GLUTATHIONE-REGULATED POTASSIUM-EFFLUX SYSTEM ANCILLARY PROTEIN KEFG"/>
    <property type="match status" value="1"/>
</dbReference>
<dbReference type="Pfam" id="PF02525">
    <property type="entry name" value="Flavodoxin_2"/>
    <property type="match status" value="1"/>
</dbReference>
<dbReference type="SUPFAM" id="SSF52218">
    <property type="entry name" value="Flavoproteins"/>
    <property type="match status" value="1"/>
</dbReference>
<proteinExistence type="inferred from homology"/>
<comment type="function">
    <text evidence="1">Regulatory subunit of a potassium efflux system that confers protection against electrophiles. Required for full activity of KefC. Shows redox enzymatic activity, but this enzymatic activity is not required for activation of KefC.</text>
</comment>
<comment type="catalytic activity">
    <reaction evidence="1">
        <text>a quinone + NADH + H(+) = a quinol + NAD(+)</text>
        <dbReference type="Rhea" id="RHEA:46160"/>
        <dbReference type="ChEBI" id="CHEBI:15378"/>
        <dbReference type="ChEBI" id="CHEBI:24646"/>
        <dbReference type="ChEBI" id="CHEBI:57540"/>
        <dbReference type="ChEBI" id="CHEBI:57945"/>
        <dbReference type="ChEBI" id="CHEBI:132124"/>
        <dbReference type="EC" id="1.6.5.2"/>
    </reaction>
</comment>
<comment type="catalytic activity">
    <reaction evidence="1">
        <text>a quinone + NADPH + H(+) = a quinol + NADP(+)</text>
        <dbReference type="Rhea" id="RHEA:46164"/>
        <dbReference type="ChEBI" id="CHEBI:15378"/>
        <dbReference type="ChEBI" id="CHEBI:24646"/>
        <dbReference type="ChEBI" id="CHEBI:57783"/>
        <dbReference type="ChEBI" id="CHEBI:58349"/>
        <dbReference type="ChEBI" id="CHEBI:132124"/>
        <dbReference type="EC" id="1.6.5.2"/>
    </reaction>
</comment>
<comment type="cofactor">
    <cofactor evidence="1">
        <name>FMN</name>
        <dbReference type="ChEBI" id="CHEBI:58210"/>
    </cofactor>
</comment>
<comment type="subunit">
    <text evidence="1">Homodimer. Interacts with KefC.</text>
</comment>
<comment type="subcellular location">
    <subcellularLocation>
        <location evidence="1">Cell inner membrane</location>
        <topology evidence="1">Peripheral membrane protein</topology>
        <orientation evidence="1">Cytoplasmic side</orientation>
    </subcellularLocation>
</comment>
<comment type="similarity">
    <text evidence="1">Belongs to the NAD(P)H dehydrogenase (quinone) family. KefF subfamily.</text>
</comment>
<organism>
    <name type="scientific">Escherichia coli O81 (strain ED1a)</name>
    <dbReference type="NCBI Taxonomy" id="585397"/>
    <lineage>
        <taxon>Bacteria</taxon>
        <taxon>Pseudomonadati</taxon>
        <taxon>Pseudomonadota</taxon>
        <taxon>Gammaproteobacteria</taxon>
        <taxon>Enterobacterales</taxon>
        <taxon>Enterobacteriaceae</taxon>
        <taxon>Escherichia</taxon>
    </lineage>
</organism>
<gene>
    <name evidence="1" type="primary">kefF</name>
    <name type="ordered locus">ECED1_0045</name>
</gene>
<sequence>MILIIYAHPYPHHSHANKRMLEQARTLEGVEIRSLYQLYPDFNIDIAAEQEALSRADLIVWQHPMQWYSIPPLLKLWIDKVFSHGWAYGHGGTALHGKHLLWAVTTGGGESHFEIGAHPGFDVLSQPLQATAIYCGLNWLPPFAMHCTFICDDETLEGQARHYKQRLLEWQEAHHG</sequence>
<evidence type="ECO:0000255" key="1">
    <source>
        <dbReference type="HAMAP-Rule" id="MF_01414"/>
    </source>
</evidence>
<keyword id="KW-0997">Cell inner membrane</keyword>
<keyword id="KW-1003">Cell membrane</keyword>
<keyword id="KW-0285">Flavoprotein</keyword>
<keyword id="KW-0288">FMN</keyword>
<keyword id="KW-0472">Membrane</keyword>
<keyword id="KW-0520">NAD</keyword>
<keyword id="KW-0560">Oxidoreductase</keyword>
<reference key="1">
    <citation type="journal article" date="2009" name="PLoS Genet.">
        <title>Organised genome dynamics in the Escherichia coli species results in highly diverse adaptive paths.</title>
        <authorList>
            <person name="Touchon M."/>
            <person name="Hoede C."/>
            <person name="Tenaillon O."/>
            <person name="Barbe V."/>
            <person name="Baeriswyl S."/>
            <person name="Bidet P."/>
            <person name="Bingen E."/>
            <person name="Bonacorsi S."/>
            <person name="Bouchier C."/>
            <person name="Bouvet O."/>
            <person name="Calteau A."/>
            <person name="Chiapello H."/>
            <person name="Clermont O."/>
            <person name="Cruveiller S."/>
            <person name="Danchin A."/>
            <person name="Diard M."/>
            <person name="Dossat C."/>
            <person name="Karoui M.E."/>
            <person name="Frapy E."/>
            <person name="Garry L."/>
            <person name="Ghigo J.M."/>
            <person name="Gilles A.M."/>
            <person name="Johnson J."/>
            <person name="Le Bouguenec C."/>
            <person name="Lescat M."/>
            <person name="Mangenot S."/>
            <person name="Martinez-Jehanne V."/>
            <person name="Matic I."/>
            <person name="Nassif X."/>
            <person name="Oztas S."/>
            <person name="Petit M.A."/>
            <person name="Pichon C."/>
            <person name="Rouy Z."/>
            <person name="Ruf C.S."/>
            <person name="Schneider D."/>
            <person name="Tourret J."/>
            <person name="Vacherie B."/>
            <person name="Vallenet D."/>
            <person name="Medigue C."/>
            <person name="Rocha E.P.C."/>
            <person name="Denamur E."/>
        </authorList>
    </citation>
    <scope>NUCLEOTIDE SEQUENCE [LARGE SCALE GENOMIC DNA]</scope>
    <source>
        <strain>ED1a</strain>
    </source>
</reference>
<protein>
    <recommendedName>
        <fullName evidence="1">Glutathione-regulated potassium-efflux system ancillary protein KefF</fullName>
    </recommendedName>
    <alternativeName>
        <fullName evidence="1">Quinone oxidoreductase KefF</fullName>
        <ecNumber evidence="1">1.6.5.2</ecNumber>
    </alternativeName>
</protein>